<name>YI020_YEAST</name>
<evidence type="ECO:0000305" key="1"/>
<evidence type="ECO:0000305" key="2">
    <source>
    </source>
</evidence>
<reference key="1">
    <citation type="journal article" date="1987" name="EMBO J.">
        <title>A yeast nuclear gene, MRS1, involved in mitochondrial RNA splicing: nucleotide sequence and mutational analysis of two overlapping open reading frames on opposite strands.</title>
        <authorList>
            <person name="Kreike J."/>
            <person name="Schulze M."/>
            <person name="Ahne F."/>
            <person name="Lang B.F."/>
        </authorList>
    </citation>
    <scope>NUCLEOTIDE SEQUENCE [GENOMIC DNA]</scope>
</reference>
<reference key="2">
    <citation type="journal article" date="1997" name="Nature">
        <title>The nucleotide sequence of Saccharomyces cerevisiae chromosome IX.</title>
        <authorList>
            <person name="Churcher C.M."/>
            <person name="Bowman S."/>
            <person name="Badcock K."/>
            <person name="Bankier A.T."/>
            <person name="Brown D."/>
            <person name="Chillingworth T."/>
            <person name="Connor R."/>
            <person name="Devlin K."/>
            <person name="Gentles S."/>
            <person name="Hamlin N."/>
            <person name="Harris D.E."/>
            <person name="Horsnell T."/>
            <person name="Hunt S."/>
            <person name="Jagels K."/>
            <person name="Jones M."/>
            <person name="Lye G."/>
            <person name="Moule S."/>
            <person name="Odell C."/>
            <person name="Pearson D."/>
            <person name="Rajandream M.A."/>
            <person name="Rice P."/>
            <person name="Rowley N."/>
            <person name="Skelton J."/>
            <person name="Smith V."/>
            <person name="Walsh S.V."/>
            <person name="Whitehead S."/>
            <person name="Barrell B.G."/>
        </authorList>
    </citation>
    <scope>NUCLEOTIDE SEQUENCE [LARGE SCALE GENOMIC DNA]</scope>
    <source>
        <strain>ATCC 204508 / S288c</strain>
    </source>
</reference>
<reference key="3">
    <citation type="journal article" date="2014" name="G3 (Bethesda)">
        <title>The reference genome sequence of Saccharomyces cerevisiae: Then and now.</title>
        <authorList>
            <person name="Engel S.R."/>
            <person name="Dietrich F.S."/>
            <person name="Fisk D.G."/>
            <person name="Binkley G."/>
            <person name="Balakrishnan R."/>
            <person name="Costanzo M.C."/>
            <person name="Dwight S.S."/>
            <person name="Hitz B.C."/>
            <person name="Karra K."/>
            <person name="Nash R.S."/>
            <person name="Weng S."/>
            <person name="Wong E.D."/>
            <person name="Lloyd P."/>
            <person name="Skrzypek M.S."/>
            <person name="Miyasato S.R."/>
            <person name="Simison M."/>
            <person name="Cherry J.M."/>
        </authorList>
    </citation>
    <scope>GENOME REANNOTATION</scope>
    <source>
        <strain>ATCC 204508 / S288c</strain>
    </source>
</reference>
<sequence length="244" mass="27550">MEGFSFNETLMGVNSHQKVSMNSGLQTAASKRAFSLVEVTYTPWHFAYSRCSRMFDCSLQLKSTRSDRSLSIETRFVILGDTPRIDMIFSVANSVSTGSKLIFCLLSVANVLSKGIFCQSTKLVLNLSSTVILQKENESFVRKTLNKLTLPSSTRRPLNCSKMPHRETKKVLNGAFLVSYHSFLLPRIIDNDFRVLKFALRQYKSIAGITDLVIFFGDIFRVTTDIQYQPILPLLLVSHLNFAV</sequence>
<gene>
    <name type="ordered locus">YIR020C-B</name>
</gene>
<accession>Q03888</accession>
<accession>Q06760</accession>
<dbReference type="EMBL" id="X05509">
    <property type="protein sequence ID" value="CAA29054.1"/>
    <property type="molecule type" value="Genomic_DNA"/>
</dbReference>
<dbReference type="EMBL" id="Z38061">
    <property type="protein sequence ID" value="CAA86180.1"/>
    <property type="molecule type" value="Genomic_DNA"/>
</dbReference>
<dbReference type="PIR" id="S48482">
    <property type="entry name" value="S48482"/>
</dbReference>
<dbReference type="PaxDb" id="4932-YIR020C-B"/>
<dbReference type="EnsemblFungi" id="YIR020C-B_mRNA">
    <property type="protein sequence ID" value="YIR020C-B"/>
    <property type="gene ID" value="YIR020C-B"/>
</dbReference>
<dbReference type="AGR" id="SGD:S000028800"/>
<dbReference type="SGD" id="S000028800">
    <property type="gene designation" value="YIR020C-B"/>
</dbReference>
<dbReference type="HOGENOM" id="CLU_1001861_0_0_1"/>
<feature type="chain" id="PRO_0000299761" description="Putative uncharacterized protein YIR020C-B">
    <location>
        <begin position="1"/>
        <end position="244"/>
    </location>
</feature>
<feature type="sequence conflict" description="In Ref. 1; CAA29054." evidence="1" ref="1">
    <original>E</original>
    <variation>G</variation>
    <location>
        <position position="38"/>
    </location>
</feature>
<comment type="miscellaneous">
    <text evidence="1">Partially overlaps MRS1.</text>
</comment>
<comment type="caution">
    <text evidence="2">Product of a dubious gene prediction unlikely to encode a functional protein. Because of that it is not part of the S.cerevisiae S288c complete/reference proteome set.</text>
</comment>
<protein>
    <recommendedName>
        <fullName>Putative uncharacterized protein YIR020C-B</fullName>
    </recommendedName>
</protein>
<organism>
    <name type="scientific">Saccharomyces cerevisiae (strain ATCC 204508 / S288c)</name>
    <name type="common">Baker's yeast</name>
    <dbReference type="NCBI Taxonomy" id="559292"/>
    <lineage>
        <taxon>Eukaryota</taxon>
        <taxon>Fungi</taxon>
        <taxon>Dikarya</taxon>
        <taxon>Ascomycota</taxon>
        <taxon>Saccharomycotina</taxon>
        <taxon>Saccharomycetes</taxon>
        <taxon>Saccharomycetales</taxon>
        <taxon>Saccharomycetaceae</taxon>
        <taxon>Saccharomyces</taxon>
    </lineage>
</organism>
<proteinExistence type="uncertain"/>